<comment type="function">
    <text evidence="1">Catalyzes the ATP-dependent amination of UTP to CTP with either L-glutamine or ammonia as the source of nitrogen. Regulates intracellular CTP levels through interactions with the four ribonucleotide triphosphates.</text>
</comment>
<comment type="catalytic activity">
    <reaction evidence="1">
        <text>UTP + L-glutamine + ATP + H2O = CTP + L-glutamate + ADP + phosphate + 2 H(+)</text>
        <dbReference type="Rhea" id="RHEA:26426"/>
        <dbReference type="ChEBI" id="CHEBI:15377"/>
        <dbReference type="ChEBI" id="CHEBI:15378"/>
        <dbReference type="ChEBI" id="CHEBI:29985"/>
        <dbReference type="ChEBI" id="CHEBI:30616"/>
        <dbReference type="ChEBI" id="CHEBI:37563"/>
        <dbReference type="ChEBI" id="CHEBI:43474"/>
        <dbReference type="ChEBI" id="CHEBI:46398"/>
        <dbReference type="ChEBI" id="CHEBI:58359"/>
        <dbReference type="ChEBI" id="CHEBI:456216"/>
        <dbReference type="EC" id="6.3.4.2"/>
    </reaction>
</comment>
<comment type="catalytic activity">
    <reaction evidence="1">
        <text>L-glutamine + H2O = L-glutamate + NH4(+)</text>
        <dbReference type="Rhea" id="RHEA:15889"/>
        <dbReference type="ChEBI" id="CHEBI:15377"/>
        <dbReference type="ChEBI" id="CHEBI:28938"/>
        <dbReference type="ChEBI" id="CHEBI:29985"/>
        <dbReference type="ChEBI" id="CHEBI:58359"/>
    </reaction>
</comment>
<comment type="catalytic activity">
    <reaction evidence="1">
        <text>UTP + NH4(+) + ATP = CTP + ADP + phosphate + 2 H(+)</text>
        <dbReference type="Rhea" id="RHEA:16597"/>
        <dbReference type="ChEBI" id="CHEBI:15378"/>
        <dbReference type="ChEBI" id="CHEBI:28938"/>
        <dbReference type="ChEBI" id="CHEBI:30616"/>
        <dbReference type="ChEBI" id="CHEBI:37563"/>
        <dbReference type="ChEBI" id="CHEBI:43474"/>
        <dbReference type="ChEBI" id="CHEBI:46398"/>
        <dbReference type="ChEBI" id="CHEBI:456216"/>
    </reaction>
</comment>
<comment type="activity regulation">
    <text evidence="1">Allosterically activated by GTP, when glutamine is the substrate; GTP has no effect on the reaction when ammonia is the substrate. The allosteric effector GTP functions by stabilizing the protein conformation that binds the tetrahedral intermediate(s) formed during glutamine hydrolysis. Inhibited by the product CTP, via allosteric rather than competitive inhibition.</text>
</comment>
<comment type="pathway">
    <text evidence="1">Pyrimidine metabolism; CTP biosynthesis via de novo pathway; CTP from UDP: step 2/2.</text>
</comment>
<comment type="subunit">
    <text evidence="1">Homotetramer.</text>
</comment>
<comment type="miscellaneous">
    <text evidence="1">CTPSs have evolved a hybrid strategy for distinguishing between UTP and CTP. The overlapping regions of the product feedback inhibitory and substrate sites recognize a common feature in both compounds, the triphosphate moiety. To differentiate isosteric substrate and product pyrimidine rings, an additional pocket far from the expected kinase/ligase catalytic site, specifically recognizes the cytosine and ribose portions of the product inhibitor.</text>
</comment>
<comment type="similarity">
    <text evidence="1">Belongs to the CTP synthase family.</text>
</comment>
<sequence length="543" mass="59817">MAKFVFVTGGVVSSIGKGIVAASLGRLLKSRGYSVSILKLDPYLNVDPGTMSPYQHGEVFVTEDGAETDLDLGHYERFTDTAMSRLNSVTTGSIYQSVINKERRGDYNGGTVQVIPHITGEIRERIHRVASNSNADVVITEIGGTVGDIESLPFLEAIREFRGDVGRHDLAYIHVTLLPYIGTSGELKTKPTQHSVKELRSIGIQPDVLVCRSDREINAELKRKIGGFCGVHERAVIPSLDADSIYAVPQTLEEQGLCREVLDVLNLTDHDSDMRAWQQLVHKMRNPGPAVKVALVGKYVQLNDAYLSVVEALRHACLAQDASLDLHWVCAEEIENRGADALLHGMDAVVVPGGFGNRGVDGKVAAIRWAREQRIPFLGLCLGMQCAVIEWARNLAGLTDATSAELEPGTSHPVIHLLPEQQDVVDLGGTMRLGVYPCRIAEGSMADRLYGDEVVYERHRHRYEFNNAYRNLFLESGYRISGSSPDGRLVELIELPEHPFFTACQYHPEFLSRPGQPHPLFRGLIEAAQQRLPNSPSEIKATA</sequence>
<gene>
    <name evidence="1" type="primary">pyrG</name>
    <name type="ordered locus">SynWH7803_2461</name>
</gene>
<dbReference type="EC" id="6.3.4.2" evidence="1"/>
<dbReference type="EMBL" id="CT971583">
    <property type="protein sequence ID" value="CAK24887.1"/>
    <property type="molecule type" value="Genomic_DNA"/>
</dbReference>
<dbReference type="SMR" id="A5GPM2"/>
<dbReference type="STRING" id="32051.SynWH7803_2461"/>
<dbReference type="KEGG" id="syx:SynWH7803_2461"/>
<dbReference type="eggNOG" id="COG0504">
    <property type="taxonomic scope" value="Bacteria"/>
</dbReference>
<dbReference type="HOGENOM" id="CLU_011675_5_0_3"/>
<dbReference type="OrthoDB" id="9801107at2"/>
<dbReference type="UniPathway" id="UPA00159">
    <property type="reaction ID" value="UER00277"/>
</dbReference>
<dbReference type="Proteomes" id="UP000001566">
    <property type="component" value="Chromosome"/>
</dbReference>
<dbReference type="GO" id="GO:0005829">
    <property type="term" value="C:cytosol"/>
    <property type="evidence" value="ECO:0007669"/>
    <property type="project" value="TreeGrafter"/>
</dbReference>
<dbReference type="GO" id="GO:0005524">
    <property type="term" value="F:ATP binding"/>
    <property type="evidence" value="ECO:0007669"/>
    <property type="project" value="UniProtKB-KW"/>
</dbReference>
<dbReference type="GO" id="GO:0003883">
    <property type="term" value="F:CTP synthase activity"/>
    <property type="evidence" value="ECO:0007669"/>
    <property type="project" value="UniProtKB-UniRule"/>
</dbReference>
<dbReference type="GO" id="GO:0004359">
    <property type="term" value="F:glutaminase activity"/>
    <property type="evidence" value="ECO:0007669"/>
    <property type="project" value="RHEA"/>
</dbReference>
<dbReference type="GO" id="GO:0042802">
    <property type="term" value="F:identical protein binding"/>
    <property type="evidence" value="ECO:0007669"/>
    <property type="project" value="TreeGrafter"/>
</dbReference>
<dbReference type="GO" id="GO:0046872">
    <property type="term" value="F:metal ion binding"/>
    <property type="evidence" value="ECO:0007669"/>
    <property type="project" value="UniProtKB-KW"/>
</dbReference>
<dbReference type="GO" id="GO:0044210">
    <property type="term" value="P:'de novo' CTP biosynthetic process"/>
    <property type="evidence" value="ECO:0007669"/>
    <property type="project" value="UniProtKB-UniRule"/>
</dbReference>
<dbReference type="GO" id="GO:0019856">
    <property type="term" value="P:pyrimidine nucleobase biosynthetic process"/>
    <property type="evidence" value="ECO:0007669"/>
    <property type="project" value="TreeGrafter"/>
</dbReference>
<dbReference type="CDD" id="cd03113">
    <property type="entry name" value="CTPS_N"/>
    <property type="match status" value="1"/>
</dbReference>
<dbReference type="CDD" id="cd01746">
    <property type="entry name" value="GATase1_CTP_Synthase"/>
    <property type="match status" value="1"/>
</dbReference>
<dbReference type="FunFam" id="3.40.50.300:FF:000009">
    <property type="entry name" value="CTP synthase"/>
    <property type="match status" value="1"/>
</dbReference>
<dbReference type="FunFam" id="3.40.50.880:FF:000002">
    <property type="entry name" value="CTP synthase"/>
    <property type="match status" value="1"/>
</dbReference>
<dbReference type="Gene3D" id="3.40.50.880">
    <property type="match status" value="1"/>
</dbReference>
<dbReference type="Gene3D" id="3.40.50.300">
    <property type="entry name" value="P-loop containing nucleotide triphosphate hydrolases"/>
    <property type="match status" value="1"/>
</dbReference>
<dbReference type="HAMAP" id="MF_01227">
    <property type="entry name" value="PyrG"/>
    <property type="match status" value="1"/>
</dbReference>
<dbReference type="InterPro" id="IPR029062">
    <property type="entry name" value="Class_I_gatase-like"/>
</dbReference>
<dbReference type="InterPro" id="IPR004468">
    <property type="entry name" value="CTP_synthase"/>
</dbReference>
<dbReference type="InterPro" id="IPR017456">
    <property type="entry name" value="CTP_synthase_N"/>
</dbReference>
<dbReference type="InterPro" id="IPR017926">
    <property type="entry name" value="GATASE"/>
</dbReference>
<dbReference type="InterPro" id="IPR033828">
    <property type="entry name" value="GATase1_CTP_Synthase"/>
</dbReference>
<dbReference type="InterPro" id="IPR027417">
    <property type="entry name" value="P-loop_NTPase"/>
</dbReference>
<dbReference type="NCBIfam" id="NF003792">
    <property type="entry name" value="PRK05380.1"/>
    <property type="match status" value="1"/>
</dbReference>
<dbReference type="NCBIfam" id="TIGR00337">
    <property type="entry name" value="PyrG"/>
    <property type="match status" value="1"/>
</dbReference>
<dbReference type="PANTHER" id="PTHR11550">
    <property type="entry name" value="CTP SYNTHASE"/>
    <property type="match status" value="1"/>
</dbReference>
<dbReference type="PANTHER" id="PTHR11550:SF0">
    <property type="entry name" value="CTP SYNTHASE-RELATED"/>
    <property type="match status" value="1"/>
</dbReference>
<dbReference type="Pfam" id="PF06418">
    <property type="entry name" value="CTP_synth_N"/>
    <property type="match status" value="1"/>
</dbReference>
<dbReference type="Pfam" id="PF00117">
    <property type="entry name" value="GATase"/>
    <property type="match status" value="1"/>
</dbReference>
<dbReference type="SUPFAM" id="SSF52317">
    <property type="entry name" value="Class I glutamine amidotransferase-like"/>
    <property type="match status" value="1"/>
</dbReference>
<dbReference type="SUPFAM" id="SSF52540">
    <property type="entry name" value="P-loop containing nucleoside triphosphate hydrolases"/>
    <property type="match status" value="1"/>
</dbReference>
<dbReference type="PROSITE" id="PS51273">
    <property type="entry name" value="GATASE_TYPE_1"/>
    <property type="match status" value="1"/>
</dbReference>
<proteinExistence type="inferred from homology"/>
<keyword id="KW-0067">ATP-binding</keyword>
<keyword id="KW-0315">Glutamine amidotransferase</keyword>
<keyword id="KW-0436">Ligase</keyword>
<keyword id="KW-0460">Magnesium</keyword>
<keyword id="KW-0479">Metal-binding</keyword>
<keyword id="KW-0547">Nucleotide-binding</keyword>
<keyword id="KW-0665">Pyrimidine biosynthesis</keyword>
<keyword id="KW-1185">Reference proteome</keyword>
<organism>
    <name type="scientific">Synechococcus sp. (strain WH7803)</name>
    <dbReference type="NCBI Taxonomy" id="32051"/>
    <lineage>
        <taxon>Bacteria</taxon>
        <taxon>Bacillati</taxon>
        <taxon>Cyanobacteriota</taxon>
        <taxon>Cyanophyceae</taxon>
        <taxon>Synechococcales</taxon>
        <taxon>Synechococcaceae</taxon>
        <taxon>Synechococcus</taxon>
    </lineage>
</organism>
<feature type="chain" id="PRO_1000139594" description="CTP synthase">
    <location>
        <begin position="1"/>
        <end position="543"/>
    </location>
</feature>
<feature type="domain" description="Glutamine amidotransferase type-1" evidence="1">
    <location>
        <begin position="292"/>
        <end position="534"/>
    </location>
</feature>
<feature type="region of interest" description="Amidoligase domain" evidence="1">
    <location>
        <begin position="1"/>
        <end position="267"/>
    </location>
</feature>
<feature type="active site" description="Nucleophile; for glutamine hydrolysis" evidence="1">
    <location>
        <position position="381"/>
    </location>
</feature>
<feature type="active site" evidence="1">
    <location>
        <position position="507"/>
    </location>
</feature>
<feature type="active site" evidence="1">
    <location>
        <position position="509"/>
    </location>
</feature>
<feature type="binding site" evidence="1">
    <location>
        <position position="13"/>
    </location>
    <ligand>
        <name>CTP</name>
        <dbReference type="ChEBI" id="CHEBI:37563"/>
        <note>allosteric inhibitor</note>
    </ligand>
</feature>
<feature type="binding site" evidence="1">
    <location>
        <position position="13"/>
    </location>
    <ligand>
        <name>UTP</name>
        <dbReference type="ChEBI" id="CHEBI:46398"/>
    </ligand>
</feature>
<feature type="binding site" evidence="1">
    <location>
        <begin position="14"/>
        <end position="19"/>
    </location>
    <ligand>
        <name>ATP</name>
        <dbReference type="ChEBI" id="CHEBI:30616"/>
    </ligand>
</feature>
<feature type="binding site" evidence="1">
    <location>
        <position position="54"/>
    </location>
    <ligand>
        <name>L-glutamine</name>
        <dbReference type="ChEBI" id="CHEBI:58359"/>
    </ligand>
</feature>
<feature type="binding site" evidence="1">
    <location>
        <position position="71"/>
    </location>
    <ligand>
        <name>ATP</name>
        <dbReference type="ChEBI" id="CHEBI:30616"/>
    </ligand>
</feature>
<feature type="binding site" evidence="1">
    <location>
        <position position="71"/>
    </location>
    <ligand>
        <name>Mg(2+)</name>
        <dbReference type="ChEBI" id="CHEBI:18420"/>
    </ligand>
</feature>
<feature type="binding site" evidence="1">
    <location>
        <position position="141"/>
    </location>
    <ligand>
        <name>Mg(2+)</name>
        <dbReference type="ChEBI" id="CHEBI:18420"/>
    </ligand>
</feature>
<feature type="binding site" evidence="1">
    <location>
        <begin position="148"/>
        <end position="150"/>
    </location>
    <ligand>
        <name>CTP</name>
        <dbReference type="ChEBI" id="CHEBI:37563"/>
        <note>allosteric inhibitor</note>
    </ligand>
</feature>
<feature type="binding site" evidence="1">
    <location>
        <begin position="188"/>
        <end position="193"/>
    </location>
    <ligand>
        <name>CTP</name>
        <dbReference type="ChEBI" id="CHEBI:37563"/>
        <note>allosteric inhibitor</note>
    </ligand>
</feature>
<feature type="binding site" evidence="1">
    <location>
        <begin position="188"/>
        <end position="193"/>
    </location>
    <ligand>
        <name>UTP</name>
        <dbReference type="ChEBI" id="CHEBI:46398"/>
    </ligand>
</feature>
<feature type="binding site" evidence="1">
    <location>
        <position position="224"/>
    </location>
    <ligand>
        <name>CTP</name>
        <dbReference type="ChEBI" id="CHEBI:37563"/>
        <note>allosteric inhibitor</note>
    </ligand>
</feature>
<feature type="binding site" evidence="1">
    <location>
        <position position="224"/>
    </location>
    <ligand>
        <name>UTP</name>
        <dbReference type="ChEBI" id="CHEBI:46398"/>
    </ligand>
</feature>
<feature type="binding site" evidence="1">
    <location>
        <position position="354"/>
    </location>
    <ligand>
        <name>L-glutamine</name>
        <dbReference type="ChEBI" id="CHEBI:58359"/>
    </ligand>
</feature>
<feature type="binding site" evidence="1">
    <location>
        <begin position="382"/>
        <end position="385"/>
    </location>
    <ligand>
        <name>L-glutamine</name>
        <dbReference type="ChEBI" id="CHEBI:58359"/>
    </ligand>
</feature>
<feature type="binding site" evidence="1">
    <location>
        <position position="405"/>
    </location>
    <ligand>
        <name>L-glutamine</name>
        <dbReference type="ChEBI" id="CHEBI:58359"/>
    </ligand>
</feature>
<feature type="binding site" evidence="1">
    <location>
        <position position="462"/>
    </location>
    <ligand>
        <name>L-glutamine</name>
        <dbReference type="ChEBI" id="CHEBI:58359"/>
    </ligand>
</feature>
<name>PYRG_SYNPW</name>
<accession>A5GPM2</accession>
<evidence type="ECO:0000255" key="1">
    <source>
        <dbReference type="HAMAP-Rule" id="MF_01227"/>
    </source>
</evidence>
<protein>
    <recommendedName>
        <fullName evidence="1">CTP synthase</fullName>
        <ecNumber evidence="1">6.3.4.2</ecNumber>
    </recommendedName>
    <alternativeName>
        <fullName evidence="1">Cytidine 5'-triphosphate synthase</fullName>
    </alternativeName>
    <alternativeName>
        <fullName evidence="1">Cytidine triphosphate synthetase</fullName>
        <shortName evidence="1">CTP synthetase</shortName>
        <shortName evidence="1">CTPS</shortName>
    </alternativeName>
    <alternativeName>
        <fullName evidence="1">UTP--ammonia ligase</fullName>
    </alternativeName>
</protein>
<reference key="1">
    <citation type="submission" date="2006-05" db="EMBL/GenBank/DDBJ databases">
        <authorList>
            <consortium name="Genoscope"/>
        </authorList>
    </citation>
    <scope>NUCLEOTIDE SEQUENCE [LARGE SCALE GENOMIC DNA]</scope>
    <source>
        <strain>WH7803</strain>
    </source>
</reference>